<feature type="chain" id="PRO_1000142060" description="Thiamine-phosphate synthase">
    <location>
        <begin position="1"/>
        <end position="351"/>
    </location>
</feature>
<feature type="region of interest" description="Unknown">
    <location>
        <begin position="1"/>
        <end position="129"/>
    </location>
</feature>
<feature type="region of interest" description="Disordered" evidence="2">
    <location>
        <begin position="65"/>
        <end position="85"/>
    </location>
</feature>
<feature type="region of interest" description="Thiamine-phosphate synthase">
    <location>
        <begin position="130"/>
        <end position="351"/>
    </location>
</feature>
<feature type="binding site" evidence="1">
    <location>
        <begin position="177"/>
        <end position="181"/>
    </location>
    <ligand>
        <name>4-amino-2-methyl-5-(diphosphooxymethyl)pyrimidine</name>
        <dbReference type="ChEBI" id="CHEBI:57841"/>
    </ligand>
</feature>
<feature type="binding site" evidence="1">
    <location>
        <position position="209"/>
    </location>
    <ligand>
        <name>4-amino-2-methyl-5-(diphosphooxymethyl)pyrimidine</name>
        <dbReference type="ChEBI" id="CHEBI:57841"/>
    </ligand>
</feature>
<feature type="binding site" evidence="1">
    <location>
        <position position="210"/>
    </location>
    <ligand>
        <name>Mg(2+)</name>
        <dbReference type="ChEBI" id="CHEBI:18420"/>
    </ligand>
</feature>
<feature type="binding site" evidence="1">
    <location>
        <position position="229"/>
    </location>
    <ligand>
        <name>Mg(2+)</name>
        <dbReference type="ChEBI" id="CHEBI:18420"/>
    </ligand>
</feature>
<feature type="binding site" evidence="1">
    <location>
        <position position="248"/>
    </location>
    <ligand>
        <name>4-amino-2-methyl-5-(diphosphooxymethyl)pyrimidine</name>
        <dbReference type="ChEBI" id="CHEBI:57841"/>
    </ligand>
</feature>
<feature type="binding site" evidence="1">
    <location>
        <begin position="274"/>
        <end position="276"/>
    </location>
    <ligand>
        <name>2-[(2R,5Z)-2-carboxy-4-methylthiazol-5(2H)-ylidene]ethyl phosphate</name>
        <dbReference type="ChEBI" id="CHEBI:62899"/>
    </ligand>
</feature>
<feature type="binding site" evidence="1">
    <location>
        <position position="277"/>
    </location>
    <ligand>
        <name>4-amino-2-methyl-5-(diphosphooxymethyl)pyrimidine</name>
        <dbReference type="ChEBI" id="CHEBI:57841"/>
    </ligand>
</feature>
<feature type="binding site" evidence="1">
    <location>
        <position position="304"/>
    </location>
    <ligand>
        <name>2-[(2R,5Z)-2-carboxy-4-methylthiazol-5(2H)-ylidene]ethyl phosphate</name>
        <dbReference type="ChEBI" id="CHEBI:62899"/>
    </ligand>
</feature>
<evidence type="ECO:0000255" key="1">
    <source>
        <dbReference type="HAMAP-Rule" id="MF_01327"/>
    </source>
</evidence>
<evidence type="ECO:0000256" key="2">
    <source>
        <dbReference type="SAM" id="MobiDB-lite"/>
    </source>
</evidence>
<sequence>MVEPYSQKEQVQQVVYRILDANLDRAREGLRIIEEWCRFGLNNAQLALECKRLRQELAKWHTPELRAARDTPGDPGTELTHPQEEERASIKSVLQANFCRVEEALRVLEEYSKLYQPNIAKACKQMRYQVYTLESNLMGHQRHQLLWRSRLYLVTSPSENLLNNVEAALKGGLTLLQYRDKTADDSLRLEQARKLRQLCHIYGALFIVNDRVDLALAVDADGVHLGQQDMPIAIARQLLGSQRLIGLSTTNKEEMQAAIAEGVDYIGVGPVYETPTKVGKAATGLEYVSYAAKNCSIPWFAIGGIDANNINDAIDAGAKRVAVVRSLMQAEQPTLVTQYLLSQLNRIKPEL</sequence>
<organism>
    <name type="scientific">Nostoc punctiforme (strain ATCC 29133 / PCC 73102)</name>
    <dbReference type="NCBI Taxonomy" id="63737"/>
    <lineage>
        <taxon>Bacteria</taxon>
        <taxon>Bacillati</taxon>
        <taxon>Cyanobacteriota</taxon>
        <taxon>Cyanophyceae</taxon>
        <taxon>Nostocales</taxon>
        <taxon>Nostocaceae</taxon>
        <taxon>Nostoc</taxon>
    </lineage>
</organism>
<dbReference type="EC" id="2.5.1.3" evidence="1"/>
<dbReference type="EMBL" id="CP001037">
    <property type="protein sequence ID" value="ACC82362.1"/>
    <property type="molecule type" value="Genomic_DNA"/>
</dbReference>
<dbReference type="SMR" id="B2J6F7"/>
<dbReference type="STRING" id="63737.Npun_R3982"/>
<dbReference type="EnsemblBacteria" id="ACC82362">
    <property type="protein sequence ID" value="ACC82362"/>
    <property type="gene ID" value="Npun_R3982"/>
</dbReference>
<dbReference type="KEGG" id="npu:Npun_R3982"/>
<dbReference type="eggNOG" id="COG0352">
    <property type="taxonomic scope" value="Bacteria"/>
</dbReference>
<dbReference type="HOGENOM" id="CLU_064900_0_0_3"/>
<dbReference type="PhylomeDB" id="B2J6F7"/>
<dbReference type="UniPathway" id="UPA00060">
    <property type="reaction ID" value="UER00141"/>
</dbReference>
<dbReference type="Proteomes" id="UP000001191">
    <property type="component" value="Chromosome"/>
</dbReference>
<dbReference type="GO" id="GO:0005737">
    <property type="term" value="C:cytoplasm"/>
    <property type="evidence" value="ECO:0007669"/>
    <property type="project" value="TreeGrafter"/>
</dbReference>
<dbReference type="GO" id="GO:0000287">
    <property type="term" value="F:magnesium ion binding"/>
    <property type="evidence" value="ECO:0007669"/>
    <property type="project" value="UniProtKB-UniRule"/>
</dbReference>
<dbReference type="GO" id="GO:0004789">
    <property type="term" value="F:thiamine-phosphate diphosphorylase activity"/>
    <property type="evidence" value="ECO:0007669"/>
    <property type="project" value="UniProtKB-UniRule"/>
</dbReference>
<dbReference type="GO" id="GO:0009228">
    <property type="term" value="P:thiamine biosynthetic process"/>
    <property type="evidence" value="ECO:0007669"/>
    <property type="project" value="UniProtKB-KW"/>
</dbReference>
<dbReference type="GO" id="GO:0009229">
    <property type="term" value="P:thiamine diphosphate biosynthetic process"/>
    <property type="evidence" value="ECO:0007669"/>
    <property type="project" value="UniProtKB-UniRule"/>
</dbReference>
<dbReference type="CDD" id="cd00564">
    <property type="entry name" value="TMP_TenI"/>
    <property type="match status" value="1"/>
</dbReference>
<dbReference type="FunFam" id="3.20.20.70:FF:000096">
    <property type="entry name" value="Thiamine-phosphate synthase"/>
    <property type="match status" value="1"/>
</dbReference>
<dbReference type="Gene3D" id="3.20.20.70">
    <property type="entry name" value="Aldolase class I"/>
    <property type="match status" value="1"/>
</dbReference>
<dbReference type="HAMAP" id="MF_00097">
    <property type="entry name" value="TMP_synthase"/>
    <property type="match status" value="1"/>
</dbReference>
<dbReference type="HAMAP" id="MF_01327">
    <property type="entry name" value="TMP_synthase_cyanobact"/>
    <property type="match status" value="1"/>
</dbReference>
<dbReference type="InterPro" id="IPR013785">
    <property type="entry name" value="Aldolase_TIM"/>
</dbReference>
<dbReference type="InterPro" id="IPR036206">
    <property type="entry name" value="ThiamineP_synth_sf"/>
</dbReference>
<dbReference type="InterPro" id="IPR022998">
    <property type="entry name" value="ThiamineP_synth_TenI"/>
</dbReference>
<dbReference type="InterPro" id="IPR041397">
    <property type="entry name" value="ThiD2"/>
</dbReference>
<dbReference type="InterPro" id="IPR034291">
    <property type="entry name" value="TMP_synthase"/>
</dbReference>
<dbReference type="InterPro" id="IPR016229">
    <property type="entry name" value="TMP_synthase_cyanobac_bac"/>
</dbReference>
<dbReference type="NCBIfam" id="NF002727">
    <property type="entry name" value="PRK02615.1"/>
    <property type="match status" value="1"/>
</dbReference>
<dbReference type="NCBIfam" id="TIGR00693">
    <property type="entry name" value="thiE"/>
    <property type="match status" value="1"/>
</dbReference>
<dbReference type="PANTHER" id="PTHR20857">
    <property type="entry name" value="THIAMINE-PHOSPHATE PYROPHOSPHORYLASE"/>
    <property type="match status" value="1"/>
</dbReference>
<dbReference type="PANTHER" id="PTHR20857:SF15">
    <property type="entry name" value="THIAMINE-PHOSPHATE SYNTHASE"/>
    <property type="match status" value="1"/>
</dbReference>
<dbReference type="Pfam" id="PF17792">
    <property type="entry name" value="ThiD2"/>
    <property type="match status" value="1"/>
</dbReference>
<dbReference type="Pfam" id="PF02581">
    <property type="entry name" value="TMP-TENI"/>
    <property type="match status" value="1"/>
</dbReference>
<dbReference type="PIRSF" id="PIRSF000512">
    <property type="entry name" value="TMP_PPase_Cyanobac_prd"/>
    <property type="match status" value="1"/>
</dbReference>
<dbReference type="SUPFAM" id="SSF51391">
    <property type="entry name" value="Thiamin phosphate synthase"/>
    <property type="match status" value="1"/>
</dbReference>
<name>THIE_NOSP7</name>
<protein>
    <recommendedName>
        <fullName evidence="1">Thiamine-phosphate synthase</fullName>
        <shortName evidence="1">TP synthase</shortName>
        <shortName evidence="1">TPS</shortName>
        <ecNumber evidence="1">2.5.1.3</ecNumber>
    </recommendedName>
    <alternativeName>
        <fullName evidence="1">Thiamine-phosphate pyrophosphorylase</fullName>
        <shortName evidence="1">TMP pyrophosphorylase</shortName>
        <shortName evidence="1">TMP-PPase</shortName>
    </alternativeName>
</protein>
<gene>
    <name evidence="1" type="primary">thiE</name>
    <name type="ordered locus">Npun_R3982</name>
</gene>
<proteinExistence type="inferred from homology"/>
<accession>B2J6F7</accession>
<reference key="1">
    <citation type="journal article" date="2013" name="Plant Physiol.">
        <title>A Nostoc punctiforme Sugar Transporter Necessary to Establish a Cyanobacterium-Plant Symbiosis.</title>
        <authorList>
            <person name="Ekman M."/>
            <person name="Picossi S."/>
            <person name="Campbell E.L."/>
            <person name="Meeks J.C."/>
            <person name="Flores E."/>
        </authorList>
    </citation>
    <scope>NUCLEOTIDE SEQUENCE [LARGE SCALE GENOMIC DNA]</scope>
    <source>
        <strain>ATCC 29133 / PCC 73102</strain>
    </source>
</reference>
<comment type="function">
    <text evidence="1">Condenses 4-methyl-5-(beta-hydroxyethyl)thiazole monophosphate (THZ-P) and 2-methyl-4-amino-5-hydroxymethyl pyrimidine pyrophosphate (HMP-PP) to form thiamine monophosphate (TMP).</text>
</comment>
<comment type="catalytic activity">
    <reaction evidence="1">
        <text>2-[(2R,5Z)-2-carboxy-4-methylthiazol-5(2H)-ylidene]ethyl phosphate + 4-amino-2-methyl-5-(diphosphooxymethyl)pyrimidine + 2 H(+) = thiamine phosphate + CO2 + diphosphate</text>
        <dbReference type="Rhea" id="RHEA:47844"/>
        <dbReference type="ChEBI" id="CHEBI:15378"/>
        <dbReference type="ChEBI" id="CHEBI:16526"/>
        <dbReference type="ChEBI" id="CHEBI:33019"/>
        <dbReference type="ChEBI" id="CHEBI:37575"/>
        <dbReference type="ChEBI" id="CHEBI:57841"/>
        <dbReference type="ChEBI" id="CHEBI:62899"/>
        <dbReference type="EC" id="2.5.1.3"/>
    </reaction>
</comment>
<comment type="catalytic activity">
    <reaction evidence="1">
        <text>2-(2-carboxy-4-methylthiazol-5-yl)ethyl phosphate + 4-amino-2-methyl-5-(diphosphooxymethyl)pyrimidine + 2 H(+) = thiamine phosphate + CO2 + diphosphate</text>
        <dbReference type="Rhea" id="RHEA:47848"/>
        <dbReference type="ChEBI" id="CHEBI:15378"/>
        <dbReference type="ChEBI" id="CHEBI:16526"/>
        <dbReference type="ChEBI" id="CHEBI:33019"/>
        <dbReference type="ChEBI" id="CHEBI:37575"/>
        <dbReference type="ChEBI" id="CHEBI:57841"/>
        <dbReference type="ChEBI" id="CHEBI:62890"/>
        <dbReference type="EC" id="2.5.1.3"/>
    </reaction>
</comment>
<comment type="catalytic activity">
    <reaction evidence="1">
        <text>4-methyl-5-(2-phosphooxyethyl)-thiazole + 4-amino-2-methyl-5-(diphosphooxymethyl)pyrimidine + H(+) = thiamine phosphate + diphosphate</text>
        <dbReference type="Rhea" id="RHEA:22328"/>
        <dbReference type="ChEBI" id="CHEBI:15378"/>
        <dbReference type="ChEBI" id="CHEBI:33019"/>
        <dbReference type="ChEBI" id="CHEBI:37575"/>
        <dbReference type="ChEBI" id="CHEBI:57841"/>
        <dbReference type="ChEBI" id="CHEBI:58296"/>
        <dbReference type="EC" id="2.5.1.3"/>
    </reaction>
</comment>
<comment type="cofactor">
    <cofactor evidence="1">
        <name>Mg(2+)</name>
        <dbReference type="ChEBI" id="CHEBI:18420"/>
    </cofactor>
    <text evidence="1">Binds 1 Mg(2+) ion per subunit.</text>
</comment>
<comment type="pathway">
    <text evidence="1">Cofactor biosynthesis; thiamine diphosphate biosynthesis; thiamine phosphate from 4-amino-2-methyl-5-diphosphomethylpyrimidine and 4-methyl-5-(2-phosphoethyl)-thiazole: step 1/1.</text>
</comment>
<comment type="similarity">
    <text evidence="1">Belongs to the thiamine-phosphate synthase family.</text>
</comment>
<keyword id="KW-0460">Magnesium</keyword>
<keyword id="KW-0479">Metal-binding</keyword>
<keyword id="KW-1185">Reference proteome</keyword>
<keyword id="KW-0784">Thiamine biosynthesis</keyword>
<keyword id="KW-0808">Transferase</keyword>